<accession>P0CE59</accession>
<accession>O07987</accession>
<accession>O07988</accession>
<accession>P03837</accession>
<accession>P76355</accession>
<accession>Q2MBK1</accession>
<accession>Q2MBM8</accession>
<reference key="1">
    <citation type="journal article" date="1996" name="DNA Res.">
        <title>A 570-kb DNA sequence of the Escherichia coli K-12 genome corresponding to the 28.0-40.1 min region on the linkage map.</title>
        <authorList>
            <person name="Aiba H."/>
            <person name="Baba T."/>
            <person name="Fujita K."/>
            <person name="Hayashi K."/>
            <person name="Inada T."/>
            <person name="Isono K."/>
            <person name="Itoh T."/>
            <person name="Kasai H."/>
            <person name="Kashimoto K."/>
            <person name="Kimura S."/>
            <person name="Kitakawa M."/>
            <person name="Kitagawa M."/>
            <person name="Makino K."/>
            <person name="Miki T."/>
            <person name="Mizobuchi K."/>
            <person name="Mori H."/>
            <person name="Mori T."/>
            <person name="Motomura K."/>
            <person name="Nakade S."/>
            <person name="Nakamura Y."/>
            <person name="Nashimoto H."/>
            <person name="Nishio Y."/>
            <person name="Oshima T."/>
            <person name="Saito N."/>
            <person name="Sampei G."/>
            <person name="Seki Y."/>
            <person name="Sivasundaram S."/>
            <person name="Tagami H."/>
            <person name="Takeda J."/>
            <person name="Takemoto K."/>
            <person name="Takeuchi Y."/>
            <person name="Wada C."/>
            <person name="Yamamoto Y."/>
            <person name="Horiuchi T."/>
        </authorList>
    </citation>
    <scope>NUCLEOTIDE SEQUENCE [LARGE SCALE GENOMIC DNA]</scope>
    <source>
        <strain>K12 / W3110 / ATCC 27325 / DSM 5911</strain>
    </source>
</reference>
<reference key="2">
    <citation type="journal article" date="1996" name="DNA Res.">
        <title>A 460-kb DNA sequence of the Escherichia coli K-12 genome corresponding to the 40.1-50.0 min region on the linkage map.</title>
        <authorList>
            <person name="Itoh T."/>
            <person name="Aiba H."/>
            <person name="Baba T."/>
            <person name="Fujita K."/>
            <person name="Hayashi K."/>
            <person name="Inada T."/>
            <person name="Isono K."/>
            <person name="Kasai H."/>
            <person name="Kimura S."/>
            <person name="Kitakawa M."/>
            <person name="Kitagawa M."/>
            <person name="Makino K."/>
            <person name="Miki T."/>
            <person name="Mizobuchi K."/>
            <person name="Mori H."/>
            <person name="Mori T."/>
            <person name="Motomura K."/>
            <person name="Nakade S."/>
            <person name="Nakamura Y."/>
            <person name="Nashimoto H."/>
            <person name="Nishio Y."/>
            <person name="Oshima T."/>
            <person name="Saito N."/>
            <person name="Sampei G."/>
            <person name="Seki Y."/>
            <person name="Sivasundaram S."/>
            <person name="Tagami H."/>
            <person name="Takeda J."/>
            <person name="Takemoto K."/>
            <person name="Wada C."/>
            <person name="Yamamoto Y."/>
            <person name="Horiuchi T."/>
        </authorList>
    </citation>
    <scope>NUCLEOTIDE SEQUENCE [LARGE SCALE GENOMIC DNA]</scope>
    <source>
        <strain>K12 / W3110 / ATCC 27325 / DSM 5911</strain>
    </source>
</reference>
<reference key="3">
    <citation type="journal article" date="2006" name="Mol. Syst. Biol.">
        <title>Highly accurate genome sequences of Escherichia coli K-12 strains MG1655 and W3110.</title>
        <authorList>
            <person name="Hayashi K."/>
            <person name="Morooka N."/>
            <person name="Yamamoto Y."/>
            <person name="Fujita K."/>
            <person name="Isono K."/>
            <person name="Choi S."/>
            <person name="Ohtsubo E."/>
            <person name="Baba T."/>
            <person name="Wanner B.L."/>
            <person name="Mori H."/>
            <person name="Horiuchi T."/>
        </authorList>
    </citation>
    <scope>NUCLEOTIDE SEQUENCE [LARGE SCALE GENOMIC DNA]</scope>
    <source>
        <strain>K12 / W3110 / ATCC 27325 / DSM 5911</strain>
    </source>
</reference>
<reference key="4">
    <citation type="submission" date="1996-02" db="EMBL/GenBank/DDBJ databases">
        <authorList>
            <person name="Mori H."/>
        </authorList>
    </citation>
    <scope>NUCLEOTIDE SEQUENCE [GENOMIC DNA]</scope>
    <source>
        <strain>K12</strain>
    </source>
</reference>
<comment type="function">
    <text>Involved in the transposition of the insertion sequence IS5.</text>
</comment>
<comment type="similarity">
    <text evidence="1">Belongs to the transposase 11 family.</text>
</comment>
<comment type="caution">
    <text evidence="1">There is no equivalent of this gene in strain K12 / MG1655.</text>
</comment>
<comment type="sequence caution" evidence="1">
    <conflict type="erroneous initiation">
        <sequence resource="EMBL-CDS" id="BAA15714"/>
    </conflict>
    <text>Truncated N-terminus.</text>
</comment>
<name>INH12_ECOLI</name>
<feature type="chain" id="PRO_0000392490" description="Transposase InsH for insertion sequence element IS5-12">
    <location>
        <begin position="1"/>
        <end position="326"/>
    </location>
</feature>
<sequence length="326" mass="37851">MSHQLTFADSEFSSKRRQTRKEIFLSRMEQILPWQNMVEVIEPFYPKAGNGRRPYPLETMLRIHCMQHWYNLSDGAMEDALYEIASMRLFARLSLDSALPDRTTIMNFRHLLEQHQLARQLFKTINRWLAEAGVMMTQGTLVDATIIEAPSSTKNKEQQRDPEMHQTKKGNQWHFGMKAHIGVDAKSGLTHSLVTTAANEHDLNQLGNLLHGEEQFVSADAGYQGAPQREELAEVDVDWLIAERPGKVRTLKQHPRKNKTAINIEYMKASIRARVEHPFRIIKRQFGFVKARYKGLLKNDNQLAMLFTLANLFRADQMIRQWERSH</sequence>
<gene>
    <name type="ordered locus">JW1882</name>
</gene>
<proteinExistence type="inferred from homology"/>
<keyword id="KW-0233">DNA recombination</keyword>
<keyword id="KW-0238">DNA-binding</keyword>
<keyword id="KW-0814">Transposable element</keyword>
<keyword id="KW-0815">Transposition</keyword>
<organism>
    <name type="scientific">Escherichia coli (strain K12)</name>
    <dbReference type="NCBI Taxonomy" id="83333"/>
    <lineage>
        <taxon>Bacteria</taxon>
        <taxon>Pseudomonadati</taxon>
        <taxon>Pseudomonadota</taxon>
        <taxon>Gammaproteobacteria</taxon>
        <taxon>Enterobacterales</taxon>
        <taxon>Enterobacteriaceae</taxon>
        <taxon>Escherichia</taxon>
    </lineage>
</organism>
<dbReference type="EMBL" id="AP009048">
    <property type="protein sequence ID" value="BAA15714.1"/>
    <property type="status" value="ALT_INIT"/>
    <property type="molecule type" value="Genomic_DNA"/>
</dbReference>
<dbReference type="RefSeq" id="WP_000019403.1">
    <property type="nucleotide sequence ID" value="NZ_SSZK01000120.1"/>
</dbReference>
<dbReference type="KEGG" id="ecj:JW1882"/>
<dbReference type="KEGG" id="ecoc:C3026_01250"/>
<dbReference type="KEGG" id="ecoc:C3026_02730"/>
<dbReference type="KEGG" id="ecoc:C3026_03280"/>
<dbReference type="KEGG" id="ecoc:C3026_07795"/>
<dbReference type="KEGG" id="ecoc:C3026_10760"/>
<dbReference type="KEGG" id="ecoc:C3026_11440"/>
<dbReference type="KEGG" id="ecoc:C3026_12250"/>
<dbReference type="KEGG" id="ecoc:C3026_16315"/>
<dbReference type="KEGG" id="ecoc:C3026_17505"/>
<dbReference type="KEGG" id="ecoc:C3026_18985"/>
<dbReference type="KEGG" id="ecoc:C3026_23975"/>
<dbReference type="HOGENOM" id="CLU_049873_1_2_6"/>
<dbReference type="PhylomeDB" id="P0CE59"/>
<dbReference type="PRO" id="PR:P0CE59"/>
<dbReference type="GO" id="GO:0003677">
    <property type="term" value="F:DNA binding"/>
    <property type="evidence" value="ECO:0007669"/>
    <property type="project" value="UniProtKB-KW"/>
</dbReference>
<dbReference type="GO" id="GO:0004803">
    <property type="term" value="F:transposase activity"/>
    <property type="evidence" value="ECO:0007669"/>
    <property type="project" value="InterPro"/>
</dbReference>
<dbReference type="GO" id="GO:0006313">
    <property type="term" value="P:DNA transposition"/>
    <property type="evidence" value="ECO:0007669"/>
    <property type="project" value="InterPro"/>
</dbReference>
<dbReference type="InterPro" id="IPR047959">
    <property type="entry name" value="Transpos_IS5"/>
</dbReference>
<dbReference type="InterPro" id="IPR002559">
    <property type="entry name" value="Transposase_11"/>
</dbReference>
<dbReference type="InterPro" id="IPR008490">
    <property type="entry name" value="Transposase_InsH_N"/>
</dbReference>
<dbReference type="NCBIfam" id="NF033581">
    <property type="entry name" value="transpos_IS5_4"/>
    <property type="match status" value="1"/>
</dbReference>
<dbReference type="PANTHER" id="PTHR35604">
    <property type="entry name" value="TRANSPOSASE INSH FOR INSERTION SEQUENCE ELEMENT IS5A-RELATED"/>
    <property type="match status" value="1"/>
</dbReference>
<dbReference type="PANTHER" id="PTHR35604:SF2">
    <property type="entry name" value="TRANSPOSASE INSH FOR INSERTION SEQUENCE ELEMENT IS5A-RELATED"/>
    <property type="match status" value="1"/>
</dbReference>
<dbReference type="Pfam" id="PF01609">
    <property type="entry name" value="DDE_Tnp_1"/>
    <property type="match status" value="1"/>
</dbReference>
<dbReference type="Pfam" id="PF05598">
    <property type="entry name" value="DUF772"/>
    <property type="match status" value="1"/>
</dbReference>
<protein>
    <recommendedName>
        <fullName>Transposase InsH for insertion sequence element IS5-12</fullName>
    </recommendedName>
</protein>
<evidence type="ECO:0000305" key="1"/>